<dbReference type="EC" id="4.1.1.39" evidence="1"/>
<dbReference type="EMBL" id="L01912">
    <property type="protein sequence ID" value="AAA16271.2"/>
    <property type="molecule type" value="Genomic_DNA"/>
</dbReference>
<dbReference type="GO" id="GO:0009507">
    <property type="term" value="C:chloroplast"/>
    <property type="evidence" value="ECO:0007669"/>
    <property type="project" value="UniProtKB-SubCell"/>
</dbReference>
<dbReference type="GO" id="GO:0000287">
    <property type="term" value="F:magnesium ion binding"/>
    <property type="evidence" value="ECO:0007669"/>
    <property type="project" value="InterPro"/>
</dbReference>
<dbReference type="GO" id="GO:0004497">
    <property type="term" value="F:monooxygenase activity"/>
    <property type="evidence" value="ECO:0007669"/>
    <property type="project" value="UniProtKB-KW"/>
</dbReference>
<dbReference type="GO" id="GO:0016984">
    <property type="term" value="F:ribulose-bisphosphate carboxylase activity"/>
    <property type="evidence" value="ECO:0007669"/>
    <property type="project" value="UniProtKB-EC"/>
</dbReference>
<dbReference type="GO" id="GO:0009853">
    <property type="term" value="P:photorespiration"/>
    <property type="evidence" value="ECO:0007669"/>
    <property type="project" value="UniProtKB-KW"/>
</dbReference>
<dbReference type="GO" id="GO:0019253">
    <property type="term" value="P:reductive pentose-phosphate cycle"/>
    <property type="evidence" value="ECO:0007669"/>
    <property type="project" value="UniProtKB-KW"/>
</dbReference>
<dbReference type="CDD" id="cd08212">
    <property type="entry name" value="RuBisCO_large_I"/>
    <property type="match status" value="1"/>
</dbReference>
<dbReference type="FunFam" id="3.20.20.110:FF:000001">
    <property type="entry name" value="Ribulose bisphosphate carboxylase large chain"/>
    <property type="match status" value="1"/>
</dbReference>
<dbReference type="FunFam" id="3.30.70.150:FF:000001">
    <property type="entry name" value="Ribulose bisphosphate carboxylase large chain"/>
    <property type="match status" value="1"/>
</dbReference>
<dbReference type="Gene3D" id="3.20.20.110">
    <property type="entry name" value="Ribulose bisphosphate carboxylase, large subunit, C-terminal domain"/>
    <property type="match status" value="1"/>
</dbReference>
<dbReference type="Gene3D" id="3.30.70.150">
    <property type="entry name" value="RuBisCO large subunit, N-terminal domain"/>
    <property type="match status" value="1"/>
</dbReference>
<dbReference type="HAMAP" id="MF_01338">
    <property type="entry name" value="RuBisCO_L_type1"/>
    <property type="match status" value="1"/>
</dbReference>
<dbReference type="InterPro" id="IPR033966">
    <property type="entry name" value="RuBisCO"/>
</dbReference>
<dbReference type="InterPro" id="IPR020878">
    <property type="entry name" value="RuBisCo_large_chain_AS"/>
</dbReference>
<dbReference type="InterPro" id="IPR000685">
    <property type="entry name" value="RuBisCO_lsu_C"/>
</dbReference>
<dbReference type="InterPro" id="IPR036376">
    <property type="entry name" value="RuBisCO_lsu_C_sf"/>
</dbReference>
<dbReference type="InterPro" id="IPR017443">
    <property type="entry name" value="RuBisCO_lsu_fd_N"/>
</dbReference>
<dbReference type="InterPro" id="IPR036422">
    <property type="entry name" value="RuBisCO_lsu_N_sf"/>
</dbReference>
<dbReference type="InterPro" id="IPR020888">
    <property type="entry name" value="RuBisCO_lsuI"/>
</dbReference>
<dbReference type="NCBIfam" id="NF003252">
    <property type="entry name" value="PRK04208.1"/>
    <property type="match status" value="1"/>
</dbReference>
<dbReference type="PANTHER" id="PTHR42704">
    <property type="entry name" value="RIBULOSE BISPHOSPHATE CARBOXYLASE"/>
    <property type="match status" value="1"/>
</dbReference>
<dbReference type="PANTHER" id="PTHR42704:SF15">
    <property type="entry name" value="RIBULOSE BISPHOSPHATE CARBOXYLASE LARGE CHAIN"/>
    <property type="match status" value="1"/>
</dbReference>
<dbReference type="Pfam" id="PF00016">
    <property type="entry name" value="RuBisCO_large"/>
    <property type="match status" value="1"/>
</dbReference>
<dbReference type="Pfam" id="PF02788">
    <property type="entry name" value="RuBisCO_large_N"/>
    <property type="match status" value="1"/>
</dbReference>
<dbReference type="SFLD" id="SFLDG01052">
    <property type="entry name" value="RuBisCO"/>
    <property type="match status" value="1"/>
</dbReference>
<dbReference type="SFLD" id="SFLDS00014">
    <property type="entry name" value="RuBisCO"/>
    <property type="match status" value="1"/>
</dbReference>
<dbReference type="SFLD" id="SFLDG00301">
    <property type="entry name" value="RuBisCO-like_proteins"/>
    <property type="match status" value="1"/>
</dbReference>
<dbReference type="SUPFAM" id="SSF51649">
    <property type="entry name" value="RuBisCo, C-terminal domain"/>
    <property type="match status" value="1"/>
</dbReference>
<dbReference type="SUPFAM" id="SSF54966">
    <property type="entry name" value="RuBisCO, large subunit, small (N-terminal) domain"/>
    <property type="match status" value="1"/>
</dbReference>
<dbReference type="PROSITE" id="PS00157">
    <property type="entry name" value="RUBISCO_LARGE"/>
    <property type="match status" value="1"/>
</dbReference>
<geneLocation type="chloroplast"/>
<accession>P28409</accession>
<gene>
    <name evidence="1" type="primary">rbcL</name>
</gene>
<evidence type="ECO:0000255" key="1">
    <source>
        <dbReference type="HAMAP-Rule" id="MF_01338"/>
    </source>
</evidence>
<protein>
    <recommendedName>
        <fullName evidence="1">Ribulose bisphosphate carboxylase large chain</fullName>
        <shortName evidence="1">RuBisCO large subunit</shortName>
        <ecNumber evidence="1">4.1.1.39</ecNumber>
    </recommendedName>
</protein>
<name>RBL_DROPA</name>
<feature type="chain" id="PRO_0000062452" description="Ribulose bisphosphate carboxylase large chain">
    <location>
        <begin position="1" status="less than"/>
        <end position="466"/>
    </location>
</feature>
<feature type="active site" description="Proton acceptor" evidence="1">
    <location>
        <position position="166"/>
    </location>
</feature>
<feature type="active site" description="Proton acceptor" evidence="1">
    <location>
        <position position="285"/>
    </location>
</feature>
<feature type="binding site" description="in homodimeric partner" evidence="1">
    <location>
        <position position="114"/>
    </location>
    <ligand>
        <name>substrate</name>
    </ligand>
</feature>
<feature type="binding site" evidence="1">
    <location>
        <position position="164"/>
    </location>
    <ligand>
        <name>substrate</name>
    </ligand>
</feature>
<feature type="binding site" evidence="1">
    <location>
        <position position="168"/>
    </location>
    <ligand>
        <name>substrate</name>
    </ligand>
</feature>
<feature type="binding site" description="via carbamate group" evidence="1">
    <location>
        <position position="192"/>
    </location>
    <ligand>
        <name>Mg(2+)</name>
        <dbReference type="ChEBI" id="CHEBI:18420"/>
    </ligand>
</feature>
<feature type="binding site" evidence="1">
    <location>
        <position position="194"/>
    </location>
    <ligand>
        <name>Mg(2+)</name>
        <dbReference type="ChEBI" id="CHEBI:18420"/>
    </ligand>
</feature>
<feature type="binding site" evidence="1">
    <location>
        <position position="195"/>
    </location>
    <ligand>
        <name>Mg(2+)</name>
        <dbReference type="ChEBI" id="CHEBI:18420"/>
    </ligand>
</feature>
<feature type="binding site" evidence="1">
    <location>
        <position position="286"/>
    </location>
    <ligand>
        <name>substrate</name>
    </ligand>
</feature>
<feature type="binding site" evidence="1">
    <location>
        <position position="318"/>
    </location>
    <ligand>
        <name>substrate</name>
    </ligand>
</feature>
<feature type="binding site" evidence="1">
    <location>
        <position position="370"/>
    </location>
    <ligand>
        <name>substrate</name>
    </ligand>
</feature>
<feature type="site" description="Transition state stabilizer" evidence="1">
    <location>
        <position position="325"/>
    </location>
</feature>
<feature type="modified residue" description="N6,N6,N6-trimethyllysine" evidence="1">
    <location>
        <position position="5"/>
    </location>
</feature>
<feature type="modified residue" description="N6-carboxylysine" evidence="1">
    <location>
        <position position="192"/>
    </location>
</feature>
<feature type="disulfide bond" description="Interchain; in linked form" evidence="1">
    <location>
        <position position="238"/>
    </location>
</feature>
<feature type="non-terminal residue">
    <location>
        <position position="1"/>
    </location>
</feature>
<proteinExistence type="inferred from homology"/>
<reference key="1">
    <citation type="journal article" date="1992" name="Science">
        <title>Carnivorous plants: phylogeny and structural evolution.</title>
        <authorList>
            <person name="Albert V.A."/>
            <person name="Williams S.E."/>
            <person name="Chase M.W."/>
        </authorList>
    </citation>
    <scope>NUCLEOTIDE SEQUENCE [GENOMIC DNA]</scope>
</reference>
<keyword id="KW-0113">Calvin cycle</keyword>
<keyword id="KW-0120">Carbon dioxide fixation</keyword>
<keyword id="KW-0150">Chloroplast</keyword>
<keyword id="KW-1015">Disulfide bond</keyword>
<keyword id="KW-0456">Lyase</keyword>
<keyword id="KW-0460">Magnesium</keyword>
<keyword id="KW-0479">Metal-binding</keyword>
<keyword id="KW-0488">Methylation</keyword>
<keyword id="KW-0503">Monooxygenase</keyword>
<keyword id="KW-0560">Oxidoreductase</keyword>
<keyword id="KW-0601">Photorespiration</keyword>
<keyword id="KW-0602">Photosynthesis</keyword>
<keyword id="KW-0934">Plastid</keyword>
<sequence length="466" mass="51523">GVGFKAGVKDYKLTYYTPDYETLDTDILAAFRVTPQPGVPAEEAGAAVAAESSTGTWTTVWTDGLTSLDRYKGRCYHIEPVAGEDNQYIVYVAYPLDLFEEGSVTNMFTSIVGNVFGFKALRALRLEDLRIPPAYSKTFQGPPHGIQVERDKLNKYGRPLLGCTTKPKLGLSAKNYGRAVYECLRGGLDFTKDDENVNSQPFMRWRDRFLFCAEAIYKAQAXTGEIKGHYLNATAGTCEEMIKRAAFASELGVPIVMHDYLTGGFTANTSLSHYCRNHGLLLHIHRAMHAVIDRQKNHGIHFRVLAKALRLSGGDHIHSGTVVGKLEGERDITLGFVDLLRDDYIEKDRSRGIYFTQFWVSLPGVLPVASGGIHVWHMPALTEIFGDDSVLQFGGGTLGHPWGNAPGAVANRVALEACVQARNEGQDLAREGNEIIRKASKWSPELAAACEVWKEIKFVFEAMDTL</sequence>
<comment type="function">
    <text evidence="1">RuBisCO catalyzes two reactions: the carboxylation of D-ribulose 1,5-bisphosphate, the primary event in carbon dioxide fixation, as well as the oxidative fragmentation of the pentose substrate in the photorespiration process. Both reactions occur simultaneously and in competition at the same active site.</text>
</comment>
<comment type="catalytic activity">
    <reaction evidence="1">
        <text>2 (2R)-3-phosphoglycerate + 2 H(+) = D-ribulose 1,5-bisphosphate + CO2 + H2O</text>
        <dbReference type="Rhea" id="RHEA:23124"/>
        <dbReference type="ChEBI" id="CHEBI:15377"/>
        <dbReference type="ChEBI" id="CHEBI:15378"/>
        <dbReference type="ChEBI" id="CHEBI:16526"/>
        <dbReference type="ChEBI" id="CHEBI:57870"/>
        <dbReference type="ChEBI" id="CHEBI:58272"/>
        <dbReference type="EC" id="4.1.1.39"/>
    </reaction>
</comment>
<comment type="catalytic activity">
    <reaction evidence="1">
        <text>D-ribulose 1,5-bisphosphate + O2 = 2-phosphoglycolate + (2R)-3-phosphoglycerate + 2 H(+)</text>
        <dbReference type="Rhea" id="RHEA:36631"/>
        <dbReference type="ChEBI" id="CHEBI:15378"/>
        <dbReference type="ChEBI" id="CHEBI:15379"/>
        <dbReference type="ChEBI" id="CHEBI:57870"/>
        <dbReference type="ChEBI" id="CHEBI:58033"/>
        <dbReference type="ChEBI" id="CHEBI:58272"/>
    </reaction>
</comment>
<comment type="cofactor">
    <cofactor evidence="1">
        <name>Mg(2+)</name>
        <dbReference type="ChEBI" id="CHEBI:18420"/>
    </cofactor>
    <text evidence="1">Binds 1 Mg(2+) ion per subunit.</text>
</comment>
<comment type="subunit">
    <text evidence="1">Heterohexadecamer of 8 large chains and 8 small chains; disulfide-linked. The disulfide link is formed within the large subunit homodimers.</text>
</comment>
<comment type="subcellular location">
    <subcellularLocation>
        <location>Plastid</location>
        <location>Chloroplast</location>
    </subcellularLocation>
</comment>
<comment type="PTM">
    <text evidence="1">The disulfide bond which can form in the large chain dimeric partners within the hexadecamer appears to be associated with oxidative stress and protein turnover.</text>
</comment>
<comment type="miscellaneous">
    <text evidence="1">The basic functional RuBisCO is composed of a large chain homodimer in a 'head-to-tail' conformation. In form I RuBisCO this homodimer is arranged in a barrel-like tetramer with the small subunits forming a tetrameric 'cap' on each end of the 'barrel'.</text>
</comment>
<comment type="similarity">
    <text evidence="1">Belongs to the RuBisCO large chain family. Type I subfamily.</text>
</comment>
<organism>
    <name type="scientific">Drosera peltata</name>
    <name type="common">Pale sundew</name>
    <dbReference type="NCBI Taxonomy" id="4369"/>
    <lineage>
        <taxon>Eukaryota</taxon>
        <taxon>Viridiplantae</taxon>
        <taxon>Streptophyta</taxon>
        <taxon>Embryophyta</taxon>
        <taxon>Tracheophyta</taxon>
        <taxon>Spermatophyta</taxon>
        <taxon>Magnoliopsida</taxon>
        <taxon>eudicotyledons</taxon>
        <taxon>Gunneridae</taxon>
        <taxon>Pentapetalae</taxon>
        <taxon>Caryophyllales</taxon>
        <taxon>Droseraceae</taxon>
        <taxon>Drosera</taxon>
    </lineage>
</organism>